<evidence type="ECO:0000250" key="1">
    <source>
        <dbReference type="UniProtKB" id="A1ZA55"/>
    </source>
</evidence>
<evidence type="ECO:0000250" key="2">
    <source>
        <dbReference type="UniProtKB" id="Q8N884"/>
    </source>
</evidence>
<evidence type="ECO:0000269" key="3">
    <source>
    </source>
</evidence>
<evidence type="ECO:0000303" key="4">
    <source>
    </source>
</evidence>
<evidence type="ECO:0000305" key="5"/>
<evidence type="ECO:0000312" key="6">
    <source>
        <dbReference type="EMBL" id="EDX07255.1"/>
    </source>
</evidence>
<comment type="function">
    <text evidence="1 3">Nucleotidyltransferase that catalyzes the formation of cyclic GMP-AMP (3',2'-cGAMP) from ATP and GTP and plays a key role in innate immunity (PubMed:34261127). Synthesizes 3',2'-cGAMP in a two-step reaction through production of the linear intermediate pppA(2'-5')pG (By similarity). Acts as a key sensor of double-stranded RNA (dsRNA), the presence of dsRNA in the cytoplasm being a danger signal that triggers the immune responses (PubMed:34261127). Directly binds dsRNA longer than 35 bp, activating the nucleotidyltransferase activity, leading to synthesis of 3',2'-cGAMP, a second messenger that binds to and activates Sting, thereby triggering the antiviral immune response via activation of the NF-kappa-B transcription factor Rel (Relish) (PubMed:34261127).</text>
</comment>
<comment type="catalytic activity">
    <reaction evidence="1">
        <text>GTP + ATP = 3',2'-cGAMP + 2 diphosphate</text>
        <dbReference type="Rhea" id="RHEA:68344"/>
        <dbReference type="ChEBI" id="CHEBI:30616"/>
        <dbReference type="ChEBI" id="CHEBI:33019"/>
        <dbReference type="ChEBI" id="CHEBI:37565"/>
        <dbReference type="ChEBI" id="CHEBI:177334"/>
    </reaction>
    <physiologicalReaction direction="left-to-right" evidence="1">
        <dbReference type="Rhea" id="RHEA:68345"/>
    </physiologicalReaction>
</comment>
<comment type="catalytic activity">
    <reaction evidence="1">
        <text>GTP + ATP = pppA(2'-5')pG + diphosphate</text>
        <dbReference type="Rhea" id="RHEA:68348"/>
        <dbReference type="ChEBI" id="CHEBI:30616"/>
        <dbReference type="ChEBI" id="CHEBI:33019"/>
        <dbReference type="ChEBI" id="CHEBI:37565"/>
        <dbReference type="ChEBI" id="CHEBI:177335"/>
    </reaction>
    <physiologicalReaction direction="left-to-right" evidence="1">
        <dbReference type="Rhea" id="RHEA:68349"/>
    </physiologicalReaction>
</comment>
<comment type="catalytic activity">
    <reaction evidence="1">
        <text>pppA(2'-5')pG = 3',2'-cGAMP + diphosphate</text>
        <dbReference type="Rhea" id="RHEA:68352"/>
        <dbReference type="ChEBI" id="CHEBI:33019"/>
        <dbReference type="ChEBI" id="CHEBI:177334"/>
        <dbReference type="ChEBI" id="CHEBI:177335"/>
    </reaction>
    <physiologicalReaction direction="left-to-right" evidence="1">
        <dbReference type="Rhea" id="RHEA:68353"/>
    </physiologicalReaction>
</comment>
<comment type="cofactor">
    <cofactor evidence="1">
        <name>Mg(2+)</name>
        <dbReference type="ChEBI" id="CHEBI:18420"/>
    </cofactor>
    <cofactor evidence="1">
        <name>Mn(2+)</name>
        <dbReference type="ChEBI" id="CHEBI:29035"/>
    </cofactor>
</comment>
<comment type="activity regulation">
    <text evidence="3">The enzyme activity is specifically activated by double-stranded RNA (dsRNA) (PubMed:34261127). Recognizes long dsRNA (&gt;30 bp) with no preference for 5' RNA phosphorylation (PubMed:34261127).</text>
</comment>
<comment type="similarity">
    <text evidence="5">Belongs to the mab-21 family.</text>
</comment>
<comment type="sequence caution" evidence="5">
    <conflict type="erroneous gene model prediction">
        <sequence resource="EMBL-CDS" id="EDX07255"/>
    </conflict>
</comment>
<reference key="1">
    <citation type="journal article" date="2007" name="Nature">
        <title>Evolution of genes and genomes on the Drosophila phylogeny.</title>
        <authorList>
            <consortium name="Drosophila 12 genomes consortium"/>
        </authorList>
    </citation>
    <scope>NUCLEOTIDE SEQUENCE [LARGE SCALE GENOMIC DNA]</scope>
</reference>
<reference key="2">
    <citation type="journal article" date="2021" name="Nature">
        <title>cGAS-like receptors sense RNA and control 3'2'-cGAMP signaling in Drosophila.</title>
        <authorList>
            <person name="Slavik K.M."/>
            <person name="Morehouse B.R."/>
            <person name="Ragucci A.E."/>
            <person name="Zhou W."/>
            <person name="Ai X."/>
            <person name="Chen Y."/>
            <person name="Li L."/>
            <person name="Wei Z."/>
            <person name="Baehre H."/>
            <person name="Koenig M."/>
            <person name="Seifert R."/>
            <person name="Lee A.S.Y."/>
            <person name="Cai H."/>
            <person name="Imler J.L."/>
            <person name="Kranzusch P.J."/>
        </authorList>
    </citation>
    <scope>FUNCTION</scope>
    <scope>ACTIVITY REGULATION</scope>
</reference>
<dbReference type="EC" id="2.7.7.-" evidence="3"/>
<dbReference type="EMBL" id="CM000362">
    <property type="protein sequence ID" value="EDX07255.1"/>
    <property type="status" value="ALT_SEQ"/>
    <property type="molecule type" value="Genomic_DNA"/>
</dbReference>
<dbReference type="SMR" id="B4QGZ2"/>
<dbReference type="EnsemblMetazoa" id="XM_016168168.3">
    <property type="protein sequence ID" value="XP_016027853.1"/>
    <property type="gene ID" value="LOC6734663"/>
</dbReference>
<dbReference type="GeneID" id="6734663"/>
<dbReference type="CTD" id="36744"/>
<dbReference type="HOGENOM" id="CLU_1469732_0_0_1"/>
<dbReference type="OrthoDB" id="7249367at2759"/>
<dbReference type="PhylomeDB" id="B4QGZ2"/>
<dbReference type="Proteomes" id="UP000000304">
    <property type="component" value="Chromosome 2R"/>
</dbReference>
<dbReference type="GO" id="GO:0061501">
    <property type="term" value="F:2',3'-cyclic GMP-AMP synthase activity"/>
    <property type="evidence" value="ECO:0007669"/>
    <property type="project" value="EnsemblMetazoa"/>
</dbReference>
<dbReference type="GO" id="GO:0140700">
    <property type="term" value="F:3',2'-cyclic GMP-AMP synthase activity"/>
    <property type="evidence" value="ECO:0000250"/>
    <property type="project" value="UniProtKB"/>
</dbReference>
<dbReference type="GO" id="GO:0005524">
    <property type="term" value="F:ATP binding"/>
    <property type="evidence" value="ECO:0007669"/>
    <property type="project" value="UniProtKB-KW"/>
</dbReference>
<dbReference type="GO" id="GO:0003725">
    <property type="term" value="F:double-stranded RNA binding"/>
    <property type="evidence" value="ECO:0000314"/>
    <property type="project" value="UniProtKB"/>
</dbReference>
<dbReference type="GO" id="GO:0005525">
    <property type="term" value="F:GTP binding"/>
    <property type="evidence" value="ECO:0007669"/>
    <property type="project" value="UniProtKB-KW"/>
</dbReference>
<dbReference type="GO" id="GO:0046872">
    <property type="term" value="F:metal ion binding"/>
    <property type="evidence" value="ECO:0007669"/>
    <property type="project" value="UniProtKB-KW"/>
</dbReference>
<dbReference type="GO" id="GO:0098586">
    <property type="term" value="P:cellular response to virus"/>
    <property type="evidence" value="ECO:0007669"/>
    <property type="project" value="EnsemblMetazoa"/>
</dbReference>
<dbReference type="GO" id="GO:0140896">
    <property type="term" value="P:cGAS/STING signaling pathway"/>
    <property type="evidence" value="ECO:0007669"/>
    <property type="project" value="EnsemblMetazoa"/>
</dbReference>
<dbReference type="GO" id="GO:0051607">
    <property type="term" value="P:defense response to virus"/>
    <property type="evidence" value="ECO:0000250"/>
    <property type="project" value="UniProtKB"/>
</dbReference>
<dbReference type="GO" id="GO:1902615">
    <property type="term" value="P:immune response involved in response to exogenous dsRNA"/>
    <property type="evidence" value="ECO:0000314"/>
    <property type="project" value="UniProtKB"/>
</dbReference>
<dbReference type="GO" id="GO:0045087">
    <property type="term" value="P:innate immune response"/>
    <property type="evidence" value="ECO:0007669"/>
    <property type="project" value="UniProtKB-KW"/>
</dbReference>
<dbReference type="Gene3D" id="1.10.1410.40">
    <property type="match status" value="1"/>
</dbReference>
<dbReference type="Gene3D" id="3.30.460.90">
    <property type="match status" value="1"/>
</dbReference>
<dbReference type="InterPro" id="IPR046903">
    <property type="entry name" value="Mab-21-like_nuc_Trfase"/>
</dbReference>
<dbReference type="InterPro" id="IPR046906">
    <property type="entry name" value="Mab-21_HhH/H2TH-like"/>
</dbReference>
<dbReference type="InterPro" id="IPR024810">
    <property type="entry name" value="MAB21L/cGLR"/>
</dbReference>
<dbReference type="PANTHER" id="PTHR10656">
    <property type="entry name" value="CELL FATE DETERMINING PROTEIN MAB21-RELATED"/>
    <property type="match status" value="1"/>
</dbReference>
<dbReference type="PANTHER" id="PTHR10656:SF42">
    <property type="entry name" value="CYCLIC GMP-AMP SYNTHASE-LIKE PROTEIN-RELATED"/>
    <property type="match status" value="1"/>
</dbReference>
<dbReference type="Pfam" id="PF03281">
    <property type="entry name" value="Mab-21"/>
    <property type="match status" value="1"/>
</dbReference>
<dbReference type="Pfam" id="PF20266">
    <property type="entry name" value="Mab-21_C"/>
    <property type="match status" value="1"/>
</dbReference>
<dbReference type="SMART" id="SM01265">
    <property type="entry name" value="Mab-21"/>
    <property type="match status" value="1"/>
</dbReference>
<protein>
    <recommendedName>
        <fullName evidence="5">Cyclic GMP-AMP synthase-like receptor 1</fullName>
        <shortName evidence="4">Ds-cGLR1</shortName>
        <shortName evidence="4">cGLR1</shortName>
        <ecNumber evidence="3">2.7.7.-</ecNumber>
    </recommendedName>
</protein>
<sequence>MSSIRYHSSAFDDGSFSVMARNLENMVNRANAQYVKIDKHREPYTVHYNALRDKVYSEWKESGVLGTLLKGSTLCGGYGDKLKVSMPDEFDLLIHLVFPENDKIIVKADASKKGNVILDMTKVMEIIGSQEHNKPVFDLLQKIVNKKKQLLEDKLNSLLQSIMTQTLNKMGNQIEVAGRISHLEYKKCGPAHTIFVKGPCEYSVDFVPAIRLSAAQVVLAPEQRRHFGGTLYWDAIPKPMKPAKTDNASFRASFYEAERSLLLGKQSLKPAIRLLKQNRNVKNKANLKSYHIKTLFLWQVVQQDASYWSNSPKDIFIEMLGKLADSLALTPKKGKLPFFWDPKLDMFAELTDSQRTDLFNHFRKCEYTFRKDNGNVNDCTENNVHSSFSINTR</sequence>
<organism>
    <name type="scientific">Drosophila simulans</name>
    <name type="common">Fruit fly</name>
    <dbReference type="NCBI Taxonomy" id="7240"/>
    <lineage>
        <taxon>Eukaryota</taxon>
        <taxon>Metazoa</taxon>
        <taxon>Ecdysozoa</taxon>
        <taxon>Arthropoda</taxon>
        <taxon>Hexapoda</taxon>
        <taxon>Insecta</taxon>
        <taxon>Pterygota</taxon>
        <taxon>Neoptera</taxon>
        <taxon>Endopterygota</taxon>
        <taxon>Diptera</taxon>
        <taxon>Brachycera</taxon>
        <taxon>Muscomorpha</taxon>
        <taxon>Ephydroidea</taxon>
        <taxon>Drosophilidae</taxon>
        <taxon>Drosophila</taxon>
        <taxon>Sophophora</taxon>
    </lineage>
</organism>
<gene>
    <name evidence="6" type="ORF">GD11141</name>
</gene>
<keyword id="KW-0051">Antiviral defense</keyword>
<keyword id="KW-0067">ATP-binding</keyword>
<keyword id="KW-0342">GTP-binding</keyword>
<keyword id="KW-0391">Immunity</keyword>
<keyword id="KW-0399">Innate immunity</keyword>
<keyword id="KW-0460">Magnesium</keyword>
<keyword id="KW-0464">Manganese</keyword>
<keyword id="KW-0479">Metal-binding</keyword>
<keyword id="KW-0547">Nucleotide-binding</keyword>
<keyword id="KW-0548">Nucleotidyltransferase</keyword>
<keyword id="KW-1185">Reference proteome</keyword>
<keyword id="KW-0694">RNA-binding</keyword>
<keyword id="KW-0808">Transferase</keyword>
<feature type="chain" id="PRO_0000454444" description="Cyclic GMP-AMP synthase-like receptor 1">
    <location>
        <begin position="1"/>
        <end position="393"/>
    </location>
</feature>
<feature type="binding site" evidence="2">
    <location>
        <begin position="89"/>
        <end position="91"/>
    </location>
    <ligand>
        <name>ATP</name>
        <dbReference type="ChEBI" id="CHEBI:30616"/>
    </ligand>
</feature>
<feature type="binding site" evidence="2">
    <location>
        <position position="89"/>
    </location>
    <ligand>
        <name>Mg(2+)</name>
        <dbReference type="ChEBI" id="CHEBI:18420"/>
        <note>catalytic</note>
    </ligand>
</feature>
<feature type="binding site" evidence="2">
    <location>
        <position position="91"/>
    </location>
    <ligand>
        <name>Mg(2+)</name>
        <dbReference type="ChEBI" id="CHEBI:18420"/>
        <note>catalytic</note>
    </ligand>
</feature>
<feature type="binding site" evidence="2">
    <location>
        <position position="205"/>
    </location>
    <ligand>
        <name>GTP</name>
        <dbReference type="ChEBI" id="CHEBI:37565"/>
    </ligand>
</feature>
<feature type="binding site" evidence="2">
    <location>
        <position position="205"/>
    </location>
    <ligand>
        <name>Mg(2+)</name>
        <dbReference type="ChEBI" id="CHEBI:18420"/>
        <note>catalytic</note>
    </ligand>
</feature>
<feature type="binding site" evidence="2">
    <location>
        <begin position="251"/>
        <end position="258"/>
    </location>
    <ligand>
        <name>GTP</name>
        <dbReference type="ChEBI" id="CHEBI:37565"/>
    </ligand>
</feature>
<feature type="binding site" evidence="2">
    <location>
        <begin position="255"/>
        <end position="258"/>
    </location>
    <ligand>
        <name>ATP</name>
        <dbReference type="ChEBI" id="CHEBI:30616"/>
    </ligand>
</feature>
<feature type="binding site" evidence="2">
    <location>
        <position position="276"/>
    </location>
    <ligand>
        <name>ATP</name>
        <dbReference type="ChEBI" id="CHEBI:30616"/>
    </ligand>
</feature>
<feature type="binding site" evidence="2">
    <location>
        <begin position="289"/>
        <end position="293"/>
    </location>
    <ligand>
        <name>ATP</name>
        <dbReference type="ChEBI" id="CHEBI:30616"/>
    </ligand>
</feature>
<proteinExistence type="inferred from homology"/>
<accession>B4QGZ2</accession>
<name>CGLR1_DROSI</name>